<comment type="function">
    <text evidence="1">Catalyzes the NADPH-dependent reduction of 7-cyano-7-deazaguanine (preQ0) to 7-aminomethyl-7-deazaguanine (preQ1).</text>
</comment>
<comment type="catalytic activity">
    <reaction evidence="1">
        <text>7-aminomethyl-7-carbaguanine + 2 NADP(+) = 7-cyano-7-deazaguanine + 2 NADPH + 3 H(+)</text>
        <dbReference type="Rhea" id="RHEA:13409"/>
        <dbReference type="ChEBI" id="CHEBI:15378"/>
        <dbReference type="ChEBI" id="CHEBI:45075"/>
        <dbReference type="ChEBI" id="CHEBI:57783"/>
        <dbReference type="ChEBI" id="CHEBI:58349"/>
        <dbReference type="ChEBI" id="CHEBI:58703"/>
        <dbReference type="EC" id="1.7.1.13"/>
    </reaction>
</comment>
<comment type="pathway">
    <text evidence="1">tRNA modification; tRNA-queuosine biosynthesis.</text>
</comment>
<comment type="subunit">
    <text evidence="1">Homodimer.</text>
</comment>
<comment type="subcellular location">
    <subcellularLocation>
        <location evidence="1">Cytoplasm</location>
    </subcellularLocation>
</comment>
<comment type="similarity">
    <text evidence="1">Belongs to the GTP cyclohydrolase I family. QueF type 2 subfamily.</text>
</comment>
<sequence>MSTLRVLHEKSELGKTTVYPKEYTPHLLLPIPRDLNRKTLNVNVSEPPPFYGYDLWNAYELSWLNEKGKPFAARGEFIIPATSSHLIESKSFKLYLNSFNNERFADAAAVSQTMKRDLSKRVNESVTVNFILHETEIPVAYSPKGSLLDVLDIAIDTYSPDPNLLSTSQETVTETLYSHLLKSNCPVTGQPDWGSIEIHYTGPKIDHAQLLKYIISYRNHEEFHEACVERFFMDILRHCRPQELTVQARYTRRGGLDINPYRSTNPTFSVQNHRSFRQ</sequence>
<reference key="1">
    <citation type="journal article" date="2009" name="Infect. Immun.">
        <title>Comparative genomics reveal extensive transposon-mediated genomic plasticity and diversity among potential effector proteins within the genus Coxiella.</title>
        <authorList>
            <person name="Beare P.A."/>
            <person name="Unsworth N."/>
            <person name="Andoh M."/>
            <person name="Voth D.E."/>
            <person name="Omsland A."/>
            <person name="Gilk S.D."/>
            <person name="Williams K.P."/>
            <person name="Sobral B.W."/>
            <person name="Kupko J.J. III"/>
            <person name="Porcella S.F."/>
            <person name="Samuel J.E."/>
            <person name="Heinzen R.A."/>
        </authorList>
    </citation>
    <scope>NUCLEOTIDE SEQUENCE [LARGE SCALE GENOMIC DNA]</scope>
    <source>
        <strain>CbuK_Q154</strain>
    </source>
</reference>
<accession>B6J5I5</accession>
<dbReference type="EC" id="1.7.1.13" evidence="1"/>
<dbReference type="EMBL" id="CP001020">
    <property type="protein sequence ID" value="ACJ21011.1"/>
    <property type="molecule type" value="Genomic_DNA"/>
</dbReference>
<dbReference type="RefSeq" id="WP_005769517.1">
    <property type="nucleotide sequence ID" value="NC_011528.1"/>
</dbReference>
<dbReference type="SMR" id="B6J5I5"/>
<dbReference type="KEGG" id="cbc:CbuK_1901"/>
<dbReference type="HOGENOM" id="CLU_054738_0_0_6"/>
<dbReference type="UniPathway" id="UPA00392"/>
<dbReference type="GO" id="GO:0005737">
    <property type="term" value="C:cytoplasm"/>
    <property type="evidence" value="ECO:0007669"/>
    <property type="project" value="UniProtKB-SubCell"/>
</dbReference>
<dbReference type="GO" id="GO:0033739">
    <property type="term" value="F:preQ1 synthase activity"/>
    <property type="evidence" value="ECO:0007669"/>
    <property type="project" value="UniProtKB-UniRule"/>
</dbReference>
<dbReference type="GO" id="GO:0008616">
    <property type="term" value="P:queuosine biosynthetic process"/>
    <property type="evidence" value="ECO:0007669"/>
    <property type="project" value="UniProtKB-UniRule"/>
</dbReference>
<dbReference type="GO" id="GO:0006400">
    <property type="term" value="P:tRNA modification"/>
    <property type="evidence" value="ECO:0007669"/>
    <property type="project" value="UniProtKB-UniRule"/>
</dbReference>
<dbReference type="Gene3D" id="3.30.1130.10">
    <property type="match status" value="2"/>
</dbReference>
<dbReference type="HAMAP" id="MF_00817">
    <property type="entry name" value="QueF_type2"/>
    <property type="match status" value="1"/>
</dbReference>
<dbReference type="InterPro" id="IPR043133">
    <property type="entry name" value="GTP-CH-I_C/QueF"/>
</dbReference>
<dbReference type="InterPro" id="IPR050084">
    <property type="entry name" value="NADPH_dep_7-cyano-7-deazaG_red"/>
</dbReference>
<dbReference type="InterPro" id="IPR029500">
    <property type="entry name" value="QueF"/>
</dbReference>
<dbReference type="InterPro" id="IPR029139">
    <property type="entry name" value="QueF_N"/>
</dbReference>
<dbReference type="InterPro" id="IPR016428">
    <property type="entry name" value="QueF_type2"/>
</dbReference>
<dbReference type="NCBIfam" id="TIGR03138">
    <property type="entry name" value="QueF"/>
    <property type="match status" value="1"/>
</dbReference>
<dbReference type="PANTHER" id="PTHR34354">
    <property type="entry name" value="NADPH-DEPENDENT 7-CYANO-7-DEAZAGUANINE REDUCTASE"/>
    <property type="match status" value="1"/>
</dbReference>
<dbReference type="PANTHER" id="PTHR34354:SF1">
    <property type="entry name" value="NADPH-DEPENDENT 7-CYANO-7-DEAZAGUANINE REDUCTASE"/>
    <property type="match status" value="1"/>
</dbReference>
<dbReference type="Pfam" id="PF14489">
    <property type="entry name" value="QueF"/>
    <property type="match status" value="1"/>
</dbReference>
<dbReference type="Pfam" id="PF14819">
    <property type="entry name" value="QueF_N"/>
    <property type="match status" value="1"/>
</dbReference>
<dbReference type="PIRSF" id="PIRSF004750">
    <property type="entry name" value="Nitrile_oxidored_YqcD_prd"/>
    <property type="match status" value="1"/>
</dbReference>
<dbReference type="SUPFAM" id="SSF55620">
    <property type="entry name" value="Tetrahydrobiopterin biosynthesis enzymes-like"/>
    <property type="match status" value="1"/>
</dbReference>
<name>QUEF_COXB1</name>
<proteinExistence type="inferred from homology"/>
<evidence type="ECO:0000255" key="1">
    <source>
        <dbReference type="HAMAP-Rule" id="MF_00817"/>
    </source>
</evidence>
<evidence type="ECO:0000256" key="2">
    <source>
        <dbReference type="SAM" id="MobiDB-lite"/>
    </source>
</evidence>
<gene>
    <name evidence="1" type="primary">queF</name>
    <name type="ordered locus">CbuK_1901</name>
</gene>
<organism>
    <name type="scientific">Coxiella burnetii (strain CbuK_Q154)</name>
    <name type="common">Coxiella burnetii (strain Q154)</name>
    <dbReference type="NCBI Taxonomy" id="434924"/>
    <lineage>
        <taxon>Bacteria</taxon>
        <taxon>Pseudomonadati</taxon>
        <taxon>Pseudomonadota</taxon>
        <taxon>Gammaproteobacteria</taxon>
        <taxon>Legionellales</taxon>
        <taxon>Coxiellaceae</taxon>
        <taxon>Coxiella</taxon>
    </lineage>
</organism>
<protein>
    <recommendedName>
        <fullName evidence="1">NADPH-dependent 7-cyano-7-deazaguanine reductase</fullName>
        <ecNumber evidence="1">1.7.1.13</ecNumber>
    </recommendedName>
    <alternativeName>
        <fullName evidence="1">7-cyano-7-carbaguanine reductase</fullName>
    </alternativeName>
    <alternativeName>
        <fullName evidence="1">NADPH-dependent nitrile oxidoreductase</fullName>
    </alternativeName>
    <alternativeName>
        <fullName evidence="1">PreQ(0) reductase</fullName>
    </alternativeName>
</protein>
<feature type="chain" id="PRO_1000134274" description="NADPH-dependent 7-cyano-7-deazaguanine reductase">
    <location>
        <begin position="1"/>
        <end position="278"/>
    </location>
</feature>
<feature type="region of interest" description="Disordered" evidence="2">
    <location>
        <begin position="255"/>
        <end position="278"/>
    </location>
</feature>
<feature type="compositionally biased region" description="Polar residues" evidence="2">
    <location>
        <begin position="261"/>
        <end position="278"/>
    </location>
</feature>
<feature type="active site" description="Thioimide intermediate" evidence="1">
    <location>
        <position position="185"/>
    </location>
</feature>
<feature type="active site" description="Proton donor" evidence="1">
    <location>
        <position position="192"/>
    </location>
</feature>
<feature type="binding site" evidence="1">
    <location>
        <begin position="87"/>
        <end position="89"/>
    </location>
    <ligand>
        <name>substrate</name>
    </ligand>
</feature>
<feature type="binding site" evidence="1">
    <location>
        <begin position="89"/>
        <end position="90"/>
    </location>
    <ligand>
        <name>NADPH</name>
        <dbReference type="ChEBI" id="CHEBI:57783"/>
    </ligand>
</feature>
<feature type="binding site" evidence="1">
    <location>
        <begin position="224"/>
        <end position="225"/>
    </location>
    <ligand>
        <name>substrate</name>
    </ligand>
</feature>
<feature type="binding site" evidence="1">
    <location>
        <begin position="253"/>
        <end position="254"/>
    </location>
    <ligand>
        <name>NADPH</name>
        <dbReference type="ChEBI" id="CHEBI:57783"/>
    </ligand>
</feature>
<keyword id="KW-0963">Cytoplasm</keyword>
<keyword id="KW-0521">NADP</keyword>
<keyword id="KW-0560">Oxidoreductase</keyword>
<keyword id="KW-0671">Queuosine biosynthesis</keyword>